<protein>
    <recommendedName>
        <fullName evidence="4 7">Pollen allergen Cro s 1</fullName>
    </recommendedName>
    <allergenName evidence="4">Cro s 1</allergenName>
</protein>
<organism evidence="7">
    <name type="scientific">Crocus sativus</name>
    <name type="common">Saffron</name>
    <dbReference type="NCBI Taxonomy" id="82528"/>
    <lineage>
        <taxon>Eukaryota</taxon>
        <taxon>Viridiplantae</taxon>
        <taxon>Streptophyta</taxon>
        <taxon>Embryophyta</taxon>
        <taxon>Tracheophyta</taxon>
        <taxon>Spermatophyta</taxon>
        <taxon>Magnoliopsida</taxon>
        <taxon>Liliopsida</taxon>
        <taxon>Asparagales</taxon>
        <taxon>Iridaceae</taxon>
        <taxon>Crocoideae</taxon>
        <taxon>Croceae</taxon>
        <taxon>Crocus</taxon>
    </lineage>
</organism>
<sequence length="168" mass="18289">MGKCQAVFLLVGALCVLSLAGVANAAENHFKVQGMVYCDTCRIQFMTRVSTIMEGATVKLECRNITAGTQTFKAEAVTDKVGQYSIPVHGDFQDDICEIELVKSPNSECSEVSHDVYAKQSAKVSLTSNNGEASDIRSANALGFMRKEPLKECPEVLKELDLYDVKAN</sequence>
<name>CROS1_CROSA</name>
<reference key="1">
    <citation type="journal article" date="2012" name="Rep. Biochem. Mol. Biol.">
        <title>Molecular cloning and expression of Cro s 1: an occupational allergen from saffron pollen (Crocus sativus).</title>
        <authorList>
            <person name="Varasteh A.R."/>
            <person name="Sankian M."/>
            <person name="Midoro-Horiuti T."/>
            <person name="Moghadam M."/>
            <person name="Shakeri M.T."/>
            <person name="Brooks E.G."/>
            <person name="Goldblum R.M."/>
            <person name="Chapman M.D."/>
            <person name="Pomes A."/>
        </authorList>
    </citation>
    <scope>NUCLEOTIDE SEQUENCE [MRNA]</scope>
    <scope>PROTEIN SEQUENCE OF 27-41</scope>
    <scope>SUBCELLULAR LOCATION</scope>
    <scope>TISSUE SPECIFICITY</scope>
    <scope>ALLERGEN</scope>
    <source>
        <tissue evidence="4">Pollen</tissue>
    </source>
</reference>
<feature type="signal peptide" evidence="3">
    <location>
        <begin position="1"/>
        <end position="26"/>
    </location>
</feature>
<feature type="chain" id="PRO_5004206139" description="Pollen allergen Cro s 1" evidence="6">
    <location>
        <begin position="27"/>
        <end position="168"/>
    </location>
</feature>
<feature type="glycosylation site" description="N-linked (GlcNAc...) asparagine" evidence="2">
    <location>
        <position position="64"/>
    </location>
</feature>
<feature type="disulfide bond" evidence="1">
    <location>
        <begin position="38"/>
        <end position="109"/>
    </location>
</feature>
<feature type="disulfide bond" evidence="1">
    <location>
        <begin position="41"/>
        <end position="153"/>
    </location>
</feature>
<feature type="disulfide bond" evidence="1">
    <location>
        <begin position="62"/>
        <end position="97"/>
    </location>
</feature>
<feature type="sequence conflict" description="In Ref. 1; AA sequence." evidence="5" ref="1">
    <original>EN</original>
    <variation>DQ</variation>
    <location>
        <begin position="27"/>
        <end position="28"/>
    </location>
</feature>
<feature type="sequence conflict" description="In Ref. 1; AA sequence." evidence="5" ref="1">
    <original>M</original>
    <variation>R</variation>
    <location>
        <position position="35"/>
    </location>
</feature>
<comment type="subcellular location">
    <subcellularLocation>
        <location evidence="3">Secreted</location>
    </subcellularLocation>
</comment>
<comment type="tissue specificity">
    <text evidence="3">Expressed in pollen.</text>
</comment>
<comment type="allergen">
    <text evidence="3">Causes an allergic reaction in human. Binds to IgE of saffron pollen-sensitized patients. Important allergen in workers of saffron industry.</text>
</comment>
<comment type="similarity">
    <text evidence="5">Belongs to the Ole e I family.</text>
</comment>
<proteinExistence type="evidence at protein level"/>
<dbReference type="EMBL" id="AY923864">
    <property type="protein sequence ID" value="AAX93750.1"/>
    <property type="molecule type" value="mRNA"/>
</dbReference>
<dbReference type="SMR" id="Q29W25"/>
<dbReference type="Allergome" id="2921">
    <property type="allergen name" value="Cro s 1"/>
</dbReference>
<dbReference type="Allergome" id="3221">
    <property type="allergen name" value="Cro s 1.0101"/>
</dbReference>
<dbReference type="GO" id="GO:0005615">
    <property type="term" value="C:extracellular space"/>
    <property type="evidence" value="ECO:0000314"/>
    <property type="project" value="UniProtKB"/>
</dbReference>
<dbReference type="InterPro" id="IPR006040">
    <property type="entry name" value="Allergen_Ole_e_I_CS"/>
</dbReference>
<dbReference type="InterPro" id="IPR006041">
    <property type="entry name" value="Pollen_Ole_e1_allergen"/>
</dbReference>
<dbReference type="PANTHER" id="PTHR31614:SF2">
    <property type="entry name" value="F28N24.16 PROTEIN"/>
    <property type="match status" value="1"/>
</dbReference>
<dbReference type="PANTHER" id="PTHR31614">
    <property type="entry name" value="PROTEIN DOWNSTREAM OF FLC-RELATED"/>
    <property type="match status" value="1"/>
</dbReference>
<dbReference type="Pfam" id="PF01190">
    <property type="entry name" value="Pollen_Ole_e_1"/>
    <property type="match status" value="1"/>
</dbReference>
<dbReference type="PROSITE" id="PS00925">
    <property type="entry name" value="OLEEI"/>
    <property type="match status" value="1"/>
</dbReference>
<evidence type="ECO:0000250" key="1">
    <source>
        <dbReference type="UniProtKB" id="P19963"/>
    </source>
</evidence>
<evidence type="ECO:0000255" key="2">
    <source>
        <dbReference type="PROSITE-ProRule" id="PRU00498"/>
    </source>
</evidence>
<evidence type="ECO:0000269" key="3">
    <source>
    </source>
</evidence>
<evidence type="ECO:0000303" key="4">
    <source>
    </source>
</evidence>
<evidence type="ECO:0000305" key="5"/>
<evidence type="ECO:0000305" key="6">
    <source>
    </source>
</evidence>
<evidence type="ECO:0000312" key="7">
    <source>
        <dbReference type="EMBL" id="AAX93750.1"/>
    </source>
</evidence>
<accession>Q29W25</accession>
<keyword id="KW-0020">Allergen</keyword>
<keyword id="KW-0903">Direct protein sequencing</keyword>
<keyword id="KW-1015">Disulfide bond</keyword>
<keyword id="KW-0325">Glycoprotein</keyword>
<keyword id="KW-0964">Secreted</keyword>
<keyword id="KW-0732">Signal</keyword>